<sequence>MCDAFVGTWKLVSSENFDDYMKEVGVGFATRKVAGMAKPTLIISVNGDVVTIKSESTFKNTEISFKLGQEFDEVTPDDRKVKSTINLDGGALVQVQNWDGKSTTIKRKLVDDKLVLECVMNGVTATRVYERA</sequence>
<organism>
    <name type="scientific">Cervus elaphus</name>
    <name type="common">Red deer</name>
    <dbReference type="NCBI Taxonomy" id="9860"/>
    <lineage>
        <taxon>Eukaryota</taxon>
        <taxon>Metazoa</taxon>
        <taxon>Chordata</taxon>
        <taxon>Craniata</taxon>
        <taxon>Vertebrata</taxon>
        <taxon>Euteleostomi</taxon>
        <taxon>Mammalia</taxon>
        <taxon>Eutheria</taxon>
        <taxon>Laurasiatheria</taxon>
        <taxon>Artiodactyla</taxon>
        <taxon>Ruminantia</taxon>
        <taxon>Pecora</taxon>
        <taxon>Cervidae</taxon>
        <taxon>Cervinae</taxon>
        <taxon>Cervus</taxon>
    </lineage>
</organism>
<reference key="1">
    <citation type="submission" date="2007-05" db="EMBL/GenBank/DDBJ databases">
        <title>Physiological versus pathological osteoporosis: Overlapping gene expression pattern in deer and human.</title>
        <authorList>
            <person name="Borsy A."/>
            <person name="Orosz L."/>
        </authorList>
    </citation>
    <scope>NUCLEOTIDE SEQUENCE [MRNA]</scope>
    <source>
        <tissue>Bone</tissue>
    </source>
</reference>
<name>FABP4_CEREL</name>
<protein>
    <recommendedName>
        <fullName>Fatty acid-binding protein, adipocyte</fullName>
    </recommendedName>
    <alternativeName>
        <fullName>Adipocyte-type fatty acid-binding protein</fullName>
        <shortName>A-FABP</shortName>
        <shortName>AFABP</shortName>
    </alternativeName>
    <alternativeName>
        <fullName>Fatty acid-binding protein 4</fullName>
    </alternativeName>
</protein>
<keyword id="KW-0007">Acetylation</keyword>
<keyword id="KW-0963">Cytoplasm</keyword>
<keyword id="KW-0446">Lipid-binding</keyword>
<keyword id="KW-0539">Nucleus</keyword>
<keyword id="KW-0597">Phosphoprotein</keyword>
<keyword id="KW-0813">Transport</keyword>
<proteinExistence type="evidence at transcript level"/>
<comment type="function">
    <text evidence="2">Lipid transport protein in adipocytes. Binds both long chain fatty acids and retinoic acid. Delivers long-chain fatty acids and retinoic acid to their cognate receptors in the nucleus.</text>
</comment>
<comment type="subunit">
    <text evidence="2 3">Monomer (By similarity). Homodimer. Interacts with PPARG (By similarity).</text>
</comment>
<comment type="subcellular location">
    <subcellularLocation>
        <location evidence="2">Cytoplasm</location>
    </subcellularLocation>
    <subcellularLocation>
        <location evidence="2">Nucleus</location>
    </subcellularLocation>
    <text evidence="2">Depending on the nature of the ligand, a conformation change exposes a nuclear localization motif and the protein is transported into the nucleus. Subject to constitutive nuclear export.</text>
</comment>
<comment type="domain">
    <text evidence="1">Forms a beta-barrel structure that accommodates the hydrophobic ligand in its interior.</text>
</comment>
<comment type="similarity">
    <text evidence="4">Belongs to the calycin superfamily. Fatty-acid binding protein (FABP) family.</text>
</comment>
<gene>
    <name type="primary">FABP4</name>
</gene>
<accession>A6YLM6</accession>
<feature type="initiator methionine" description="Removed" evidence="3">
    <location>
        <position position="1"/>
    </location>
</feature>
<feature type="chain" id="PRO_0000317431" description="Fatty acid-binding protein, adipocyte">
    <location>
        <begin position="2"/>
        <end position="132"/>
    </location>
</feature>
<feature type="short sequence motif" description="Nuclear localization signal" evidence="1">
    <location>
        <begin position="22"/>
        <end position="32"/>
    </location>
</feature>
<feature type="binding site" evidence="1">
    <location>
        <begin position="127"/>
        <end position="129"/>
    </location>
    <ligand>
        <name>a fatty acid</name>
        <dbReference type="ChEBI" id="CHEBI:28868"/>
    </ligand>
</feature>
<feature type="modified residue" description="N-acetylcysteine" evidence="3">
    <location>
        <position position="2"/>
    </location>
</feature>
<feature type="modified residue" description="Phosphoserine" evidence="2">
    <location>
        <position position="13"/>
    </location>
</feature>
<feature type="modified residue" description="Phosphotyrosine; by Tyr-kinases" evidence="1">
    <location>
        <position position="20"/>
    </location>
</feature>
<evidence type="ECO:0000250" key="1"/>
<evidence type="ECO:0000250" key="2">
    <source>
        <dbReference type="UniProtKB" id="P04117"/>
    </source>
</evidence>
<evidence type="ECO:0000250" key="3">
    <source>
        <dbReference type="UniProtKB" id="P15090"/>
    </source>
</evidence>
<evidence type="ECO:0000305" key="4"/>
<dbReference type="EMBL" id="EF619485">
    <property type="protein sequence ID" value="ABR68240.1"/>
    <property type="molecule type" value="mRNA"/>
</dbReference>
<dbReference type="SMR" id="A6YLM6"/>
<dbReference type="GO" id="GO:0005737">
    <property type="term" value="C:cytoplasm"/>
    <property type="evidence" value="ECO:0000250"/>
    <property type="project" value="UniProtKB"/>
</dbReference>
<dbReference type="GO" id="GO:0005634">
    <property type="term" value="C:nucleus"/>
    <property type="evidence" value="ECO:0000250"/>
    <property type="project" value="UniProtKB"/>
</dbReference>
<dbReference type="GO" id="GO:0036041">
    <property type="term" value="F:long-chain fatty acid binding"/>
    <property type="evidence" value="ECO:0000250"/>
    <property type="project" value="UniProtKB"/>
</dbReference>
<dbReference type="GO" id="GO:0005324">
    <property type="term" value="F:long-chain fatty acid transmembrane transporter activity"/>
    <property type="evidence" value="ECO:0000250"/>
    <property type="project" value="UniProtKB"/>
</dbReference>
<dbReference type="GO" id="GO:0015909">
    <property type="term" value="P:long-chain fatty acid transport"/>
    <property type="evidence" value="ECO:0000250"/>
    <property type="project" value="UniProtKB"/>
</dbReference>
<dbReference type="FunFam" id="2.40.128.20:FF:000001">
    <property type="entry name" value="Fatty acid-binding protein, adipocyte"/>
    <property type="match status" value="1"/>
</dbReference>
<dbReference type="Gene3D" id="2.40.128.20">
    <property type="match status" value="1"/>
</dbReference>
<dbReference type="InterPro" id="IPR012674">
    <property type="entry name" value="Calycin"/>
</dbReference>
<dbReference type="InterPro" id="IPR000463">
    <property type="entry name" value="Fatty_acid-bd"/>
</dbReference>
<dbReference type="InterPro" id="IPR031259">
    <property type="entry name" value="ILBP"/>
</dbReference>
<dbReference type="InterPro" id="IPR000566">
    <property type="entry name" value="Lipocln_cytosolic_FA-bd_dom"/>
</dbReference>
<dbReference type="PANTHER" id="PTHR11955">
    <property type="entry name" value="FATTY ACID BINDING PROTEIN"/>
    <property type="match status" value="1"/>
</dbReference>
<dbReference type="Pfam" id="PF00061">
    <property type="entry name" value="Lipocalin"/>
    <property type="match status" value="1"/>
</dbReference>
<dbReference type="PRINTS" id="PR00178">
    <property type="entry name" value="FATTYACIDBP"/>
</dbReference>
<dbReference type="SUPFAM" id="SSF50814">
    <property type="entry name" value="Lipocalins"/>
    <property type="match status" value="1"/>
</dbReference>
<dbReference type="PROSITE" id="PS00214">
    <property type="entry name" value="FABP"/>
    <property type="match status" value="1"/>
</dbReference>